<proteinExistence type="evidence at transcript level"/>
<feature type="chain" id="PRO_0000371997" description="Zinc finger CCCH domain-containing protein 42">
    <location>
        <begin position="1"/>
        <end position="352"/>
    </location>
</feature>
<feature type="domain" description="RRM" evidence="2">
    <location>
        <begin position="36"/>
        <end position="114"/>
    </location>
</feature>
<feature type="zinc finger region" description="C3H1-type 1" evidence="3">
    <location>
        <begin position="130"/>
        <end position="157"/>
    </location>
</feature>
<feature type="zinc finger region" description="C3H1-type 2" evidence="3">
    <location>
        <begin position="180"/>
        <end position="207"/>
    </location>
</feature>
<feature type="region of interest" description="Disordered" evidence="4">
    <location>
        <begin position="156"/>
        <end position="179"/>
    </location>
</feature>
<feature type="region of interest" description="Disordered" evidence="4">
    <location>
        <begin position="210"/>
        <end position="352"/>
    </location>
</feature>
<feature type="coiled-coil region" evidence="1">
    <location>
        <begin position="319"/>
        <end position="348"/>
    </location>
</feature>
<feature type="compositionally biased region" description="Basic and acidic residues" evidence="4">
    <location>
        <begin position="210"/>
        <end position="230"/>
    </location>
</feature>
<feature type="compositionally biased region" description="Basic and acidic residues" evidence="4">
    <location>
        <begin position="243"/>
        <end position="296"/>
    </location>
</feature>
<feature type="compositionally biased region" description="Basic and acidic residues" evidence="4">
    <location>
        <begin position="304"/>
        <end position="352"/>
    </location>
</feature>
<accession>Q9SD61</accession>
<gene>
    <name type="ordered locus">At3g47120</name>
    <name type="ORF">F13I12.170</name>
</gene>
<keyword id="KW-0175">Coiled coil</keyword>
<keyword id="KW-0238">DNA-binding</keyword>
<keyword id="KW-0479">Metal-binding</keyword>
<keyword id="KW-1185">Reference proteome</keyword>
<keyword id="KW-0677">Repeat</keyword>
<keyword id="KW-0694">RNA-binding</keyword>
<keyword id="KW-0862">Zinc</keyword>
<keyword id="KW-0863">Zinc-finger</keyword>
<name>C3H42_ARATH</name>
<evidence type="ECO:0000255" key="1"/>
<evidence type="ECO:0000255" key="2">
    <source>
        <dbReference type="PROSITE-ProRule" id="PRU00176"/>
    </source>
</evidence>
<evidence type="ECO:0000255" key="3">
    <source>
        <dbReference type="PROSITE-ProRule" id="PRU00723"/>
    </source>
</evidence>
<evidence type="ECO:0000256" key="4">
    <source>
        <dbReference type="SAM" id="MobiDB-lite"/>
    </source>
</evidence>
<reference key="1">
    <citation type="journal article" date="2000" name="Nature">
        <title>Sequence and analysis of chromosome 3 of the plant Arabidopsis thaliana.</title>
        <authorList>
            <person name="Salanoubat M."/>
            <person name="Lemcke K."/>
            <person name="Rieger M."/>
            <person name="Ansorge W."/>
            <person name="Unseld M."/>
            <person name="Fartmann B."/>
            <person name="Valle G."/>
            <person name="Bloecker H."/>
            <person name="Perez-Alonso M."/>
            <person name="Obermaier B."/>
            <person name="Delseny M."/>
            <person name="Boutry M."/>
            <person name="Grivell L.A."/>
            <person name="Mache R."/>
            <person name="Puigdomenech P."/>
            <person name="De Simone V."/>
            <person name="Choisne N."/>
            <person name="Artiguenave F."/>
            <person name="Robert C."/>
            <person name="Brottier P."/>
            <person name="Wincker P."/>
            <person name="Cattolico L."/>
            <person name="Weissenbach J."/>
            <person name="Saurin W."/>
            <person name="Quetier F."/>
            <person name="Schaefer M."/>
            <person name="Mueller-Auer S."/>
            <person name="Gabel C."/>
            <person name="Fuchs M."/>
            <person name="Benes V."/>
            <person name="Wurmbach E."/>
            <person name="Drzonek H."/>
            <person name="Erfle H."/>
            <person name="Jordan N."/>
            <person name="Bangert S."/>
            <person name="Wiedelmann R."/>
            <person name="Kranz H."/>
            <person name="Voss H."/>
            <person name="Holland R."/>
            <person name="Brandt P."/>
            <person name="Nyakatura G."/>
            <person name="Vezzi A."/>
            <person name="D'Angelo M."/>
            <person name="Pallavicini A."/>
            <person name="Toppo S."/>
            <person name="Simionati B."/>
            <person name="Conrad A."/>
            <person name="Hornischer K."/>
            <person name="Kauer G."/>
            <person name="Loehnert T.-H."/>
            <person name="Nordsiek G."/>
            <person name="Reichelt J."/>
            <person name="Scharfe M."/>
            <person name="Schoen O."/>
            <person name="Bargues M."/>
            <person name="Terol J."/>
            <person name="Climent J."/>
            <person name="Navarro P."/>
            <person name="Collado C."/>
            <person name="Perez-Perez A."/>
            <person name="Ottenwaelder B."/>
            <person name="Duchemin D."/>
            <person name="Cooke R."/>
            <person name="Laudie M."/>
            <person name="Berger-Llauro C."/>
            <person name="Purnelle B."/>
            <person name="Masuy D."/>
            <person name="de Haan M."/>
            <person name="Maarse A.C."/>
            <person name="Alcaraz J.-P."/>
            <person name="Cottet A."/>
            <person name="Casacuberta E."/>
            <person name="Monfort A."/>
            <person name="Argiriou A."/>
            <person name="Flores M."/>
            <person name="Liguori R."/>
            <person name="Vitale D."/>
            <person name="Mannhaupt G."/>
            <person name="Haase D."/>
            <person name="Schoof H."/>
            <person name="Rudd S."/>
            <person name="Zaccaria P."/>
            <person name="Mewes H.-W."/>
            <person name="Mayer K.F.X."/>
            <person name="Kaul S."/>
            <person name="Town C.D."/>
            <person name="Koo H.L."/>
            <person name="Tallon L.J."/>
            <person name="Jenkins J."/>
            <person name="Rooney T."/>
            <person name="Rizzo M."/>
            <person name="Walts A."/>
            <person name="Utterback T."/>
            <person name="Fujii C.Y."/>
            <person name="Shea T.P."/>
            <person name="Creasy T.H."/>
            <person name="Haas B."/>
            <person name="Maiti R."/>
            <person name="Wu D."/>
            <person name="Peterson J."/>
            <person name="Van Aken S."/>
            <person name="Pai G."/>
            <person name="Militscher J."/>
            <person name="Sellers P."/>
            <person name="Gill J.E."/>
            <person name="Feldblyum T.V."/>
            <person name="Preuss D."/>
            <person name="Lin X."/>
            <person name="Nierman W.C."/>
            <person name="Salzberg S.L."/>
            <person name="White O."/>
            <person name="Venter J.C."/>
            <person name="Fraser C.M."/>
            <person name="Kaneko T."/>
            <person name="Nakamura Y."/>
            <person name="Sato S."/>
            <person name="Kato T."/>
            <person name="Asamizu E."/>
            <person name="Sasamoto S."/>
            <person name="Kimura T."/>
            <person name="Idesawa K."/>
            <person name="Kawashima K."/>
            <person name="Kishida Y."/>
            <person name="Kiyokawa C."/>
            <person name="Kohara M."/>
            <person name="Matsumoto M."/>
            <person name="Matsuno A."/>
            <person name="Muraki A."/>
            <person name="Nakayama S."/>
            <person name="Nakazaki N."/>
            <person name="Shinpo S."/>
            <person name="Takeuchi C."/>
            <person name="Wada T."/>
            <person name="Watanabe A."/>
            <person name="Yamada M."/>
            <person name="Yasuda M."/>
            <person name="Tabata S."/>
        </authorList>
    </citation>
    <scope>NUCLEOTIDE SEQUENCE [LARGE SCALE GENOMIC DNA]</scope>
    <source>
        <strain>cv. Columbia</strain>
    </source>
</reference>
<reference key="2">
    <citation type="journal article" date="2017" name="Plant J.">
        <title>Araport11: a complete reannotation of the Arabidopsis thaliana reference genome.</title>
        <authorList>
            <person name="Cheng C.Y."/>
            <person name="Krishnakumar V."/>
            <person name="Chan A.P."/>
            <person name="Thibaud-Nissen F."/>
            <person name="Schobel S."/>
            <person name="Town C.D."/>
        </authorList>
    </citation>
    <scope>GENOME REANNOTATION</scope>
    <source>
        <strain>cv. Columbia</strain>
    </source>
</reference>
<reference key="3">
    <citation type="journal article" date="2003" name="Science">
        <title>Empirical analysis of transcriptional activity in the Arabidopsis genome.</title>
        <authorList>
            <person name="Yamada K."/>
            <person name="Lim J."/>
            <person name="Dale J.M."/>
            <person name="Chen H."/>
            <person name="Shinn P."/>
            <person name="Palm C.J."/>
            <person name="Southwick A.M."/>
            <person name="Wu H.C."/>
            <person name="Kim C.J."/>
            <person name="Nguyen M."/>
            <person name="Pham P.K."/>
            <person name="Cheuk R.F."/>
            <person name="Karlin-Newmann G."/>
            <person name="Liu S.X."/>
            <person name="Lam B."/>
            <person name="Sakano H."/>
            <person name="Wu T."/>
            <person name="Yu G."/>
            <person name="Miranda M."/>
            <person name="Quach H.L."/>
            <person name="Tripp M."/>
            <person name="Chang C.H."/>
            <person name="Lee J.M."/>
            <person name="Toriumi M.J."/>
            <person name="Chan M.M."/>
            <person name="Tang C.C."/>
            <person name="Onodera C.S."/>
            <person name="Deng J.M."/>
            <person name="Akiyama K."/>
            <person name="Ansari Y."/>
            <person name="Arakawa T."/>
            <person name="Banh J."/>
            <person name="Banno F."/>
            <person name="Bowser L."/>
            <person name="Brooks S.Y."/>
            <person name="Carninci P."/>
            <person name="Chao Q."/>
            <person name="Choy N."/>
            <person name="Enju A."/>
            <person name="Goldsmith A.D."/>
            <person name="Gurjal M."/>
            <person name="Hansen N.F."/>
            <person name="Hayashizaki Y."/>
            <person name="Johnson-Hopson C."/>
            <person name="Hsuan V.W."/>
            <person name="Iida K."/>
            <person name="Karnes M."/>
            <person name="Khan S."/>
            <person name="Koesema E."/>
            <person name="Ishida J."/>
            <person name="Jiang P.X."/>
            <person name="Jones T."/>
            <person name="Kawai J."/>
            <person name="Kamiya A."/>
            <person name="Meyers C."/>
            <person name="Nakajima M."/>
            <person name="Narusaka M."/>
            <person name="Seki M."/>
            <person name="Sakurai T."/>
            <person name="Satou M."/>
            <person name="Tamse R."/>
            <person name="Vaysberg M."/>
            <person name="Wallender E.K."/>
            <person name="Wong C."/>
            <person name="Yamamura Y."/>
            <person name="Yuan S."/>
            <person name="Shinozaki K."/>
            <person name="Davis R.W."/>
            <person name="Theologis A."/>
            <person name="Ecker J.R."/>
        </authorList>
    </citation>
    <scope>NUCLEOTIDE SEQUENCE [LARGE SCALE MRNA]</scope>
    <source>
        <strain>cv. Columbia</strain>
    </source>
</reference>
<reference key="4">
    <citation type="journal article" date="2008" name="BMC Genomics">
        <title>Genome-wide analysis of CCCH zinc finger family in Arabidopsis and rice.</title>
        <authorList>
            <person name="Wang D."/>
            <person name="Guo Y."/>
            <person name="Wu C."/>
            <person name="Yang G."/>
            <person name="Li Y."/>
            <person name="Zheng C."/>
        </authorList>
    </citation>
    <scope>NOMENCLATURE</scope>
</reference>
<organism>
    <name type="scientific">Arabidopsis thaliana</name>
    <name type="common">Mouse-ear cress</name>
    <dbReference type="NCBI Taxonomy" id="3702"/>
    <lineage>
        <taxon>Eukaryota</taxon>
        <taxon>Viridiplantae</taxon>
        <taxon>Streptophyta</taxon>
        <taxon>Embryophyta</taxon>
        <taxon>Tracheophyta</taxon>
        <taxon>Spermatophyta</taxon>
        <taxon>Magnoliopsida</taxon>
        <taxon>eudicotyledons</taxon>
        <taxon>Gunneridae</taxon>
        <taxon>Pentapetalae</taxon>
        <taxon>rosids</taxon>
        <taxon>malvids</taxon>
        <taxon>Brassicales</taxon>
        <taxon>Brassicaceae</taxon>
        <taxon>Camelineae</taxon>
        <taxon>Arabidopsis</taxon>
    </lineage>
</organism>
<protein>
    <recommendedName>
        <fullName>Zinc finger CCCH domain-containing protein 42</fullName>
        <shortName>AtC3H42</shortName>
    </recommendedName>
</protein>
<dbReference type="EMBL" id="AL133292">
    <property type="protein sequence ID" value="CAB61958.1"/>
    <property type="molecule type" value="Genomic_DNA"/>
</dbReference>
<dbReference type="EMBL" id="CP002686">
    <property type="protein sequence ID" value="AEE78245.1"/>
    <property type="molecule type" value="Genomic_DNA"/>
</dbReference>
<dbReference type="EMBL" id="BT002472">
    <property type="protein sequence ID" value="AAO00832.1"/>
    <property type="molecule type" value="mRNA"/>
</dbReference>
<dbReference type="EMBL" id="BT010369">
    <property type="protein sequence ID" value="AAQ56812.1"/>
    <property type="molecule type" value="mRNA"/>
</dbReference>
<dbReference type="PIR" id="T45648">
    <property type="entry name" value="T45648"/>
</dbReference>
<dbReference type="RefSeq" id="NP_190296.1">
    <property type="nucleotide sequence ID" value="NM_114579.3"/>
</dbReference>
<dbReference type="SMR" id="Q9SD61"/>
<dbReference type="BioGRID" id="9185">
    <property type="interactions" value="5"/>
</dbReference>
<dbReference type="FunCoup" id="Q9SD61">
    <property type="interactions" value="289"/>
</dbReference>
<dbReference type="IntAct" id="Q9SD61">
    <property type="interactions" value="5"/>
</dbReference>
<dbReference type="STRING" id="3702.Q9SD61"/>
<dbReference type="PaxDb" id="3702-AT3G47120.1"/>
<dbReference type="ProteomicsDB" id="240452"/>
<dbReference type="EnsemblPlants" id="AT3G47120.1">
    <property type="protein sequence ID" value="AT3G47120.1"/>
    <property type="gene ID" value="AT3G47120"/>
</dbReference>
<dbReference type="GeneID" id="823865"/>
<dbReference type="Gramene" id="AT3G47120.1">
    <property type="protein sequence ID" value="AT3G47120.1"/>
    <property type="gene ID" value="AT3G47120"/>
</dbReference>
<dbReference type="KEGG" id="ath:AT3G47120"/>
<dbReference type="Araport" id="AT3G47120"/>
<dbReference type="TAIR" id="AT3G47120">
    <property type="gene designation" value="GDS1"/>
</dbReference>
<dbReference type="eggNOG" id="KOG0126">
    <property type="taxonomic scope" value="Eukaryota"/>
</dbReference>
<dbReference type="HOGENOM" id="CLU_045495_0_2_1"/>
<dbReference type="InParanoid" id="Q9SD61"/>
<dbReference type="PhylomeDB" id="Q9SD61"/>
<dbReference type="CD-CODE" id="9A8A194B">
    <property type="entry name" value="Nuclear speckle"/>
</dbReference>
<dbReference type="PRO" id="PR:Q9SD61"/>
<dbReference type="Proteomes" id="UP000006548">
    <property type="component" value="Chromosome 3"/>
</dbReference>
<dbReference type="ExpressionAtlas" id="Q9SD61">
    <property type="expression patterns" value="baseline and differential"/>
</dbReference>
<dbReference type="GO" id="GO:0016607">
    <property type="term" value="C:nuclear speck"/>
    <property type="evidence" value="ECO:0000314"/>
    <property type="project" value="TAIR"/>
</dbReference>
<dbReference type="GO" id="GO:0003723">
    <property type="term" value="F:RNA binding"/>
    <property type="evidence" value="ECO:0007669"/>
    <property type="project" value="UniProtKB-KW"/>
</dbReference>
<dbReference type="GO" id="GO:0000976">
    <property type="term" value="F:transcription cis-regulatory region binding"/>
    <property type="evidence" value="ECO:0000353"/>
    <property type="project" value="TAIR"/>
</dbReference>
<dbReference type="GO" id="GO:0008270">
    <property type="term" value="F:zinc ion binding"/>
    <property type="evidence" value="ECO:0007669"/>
    <property type="project" value="UniProtKB-KW"/>
</dbReference>
<dbReference type="GO" id="GO:0000398">
    <property type="term" value="P:mRNA splicing, via spliceosome"/>
    <property type="evidence" value="ECO:0007669"/>
    <property type="project" value="InterPro"/>
</dbReference>
<dbReference type="CDD" id="cd12411">
    <property type="entry name" value="RRM_ist3_like"/>
    <property type="match status" value="1"/>
</dbReference>
<dbReference type="FunFam" id="3.30.70.330:FF:000218">
    <property type="entry name" value="RNA-binding motif protein, X-linked 2"/>
    <property type="match status" value="1"/>
</dbReference>
<dbReference type="FunFam" id="4.10.1000.10:FF:000075">
    <property type="entry name" value="Zinc finger CCCH domain-containing protein 42"/>
    <property type="match status" value="2"/>
</dbReference>
<dbReference type="Gene3D" id="3.30.70.330">
    <property type="match status" value="1"/>
</dbReference>
<dbReference type="Gene3D" id="4.10.1000.10">
    <property type="entry name" value="Zinc finger, CCCH-type"/>
    <property type="match status" value="2"/>
</dbReference>
<dbReference type="InterPro" id="IPR012677">
    <property type="entry name" value="Nucleotide-bd_a/b_plait_sf"/>
</dbReference>
<dbReference type="InterPro" id="IPR035979">
    <property type="entry name" value="RBD_domain_sf"/>
</dbReference>
<dbReference type="InterPro" id="IPR051847">
    <property type="entry name" value="RNA_proc/Spliceosome_comp"/>
</dbReference>
<dbReference type="InterPro" id="IPR000504">
    <property type="entry name" value="RRM_dom"/>
</dbReference>
<dbReference type="InterPro" id="IPR045844">
    <property type="entry name" value="RRM_Ist3-like"/>
</dbReference>
<dbReference type="InterPro" id="IPR041367">
    <property type="entry name" value="Znf-CCCH_4"/>
</dbReference>
<dbReference type="InterPro" id="IPR000571">
    <property type="entry name" value="Znf_CCCH"/>
</dbReference>
<dbReference type="InterPro" id="IPR036855">
    <property type="entry name" value="Znf_CCCH_sf"/>
</dbReference>
<dbReference type="PANTHER" id="PTHR45880">
    <property type="entry name" value="RNA-BINDING MOTIF PROTEIN, X-LINKED 2"/>
    <property type="match status" value="1"/>
</dbReference>
<dbReference type="PANTHER" id="PTHR45880:SF1">
    <property type="entry name" value="RNA-BINDING MOTIF PROTEIN, X-LINKED 2"/>
    <property type="match status" value="1"/>
</dbReference>
<dbReference type="Pfam" id="PF00076">
    <property type="entry name" value="RRM_1"/>
    <property type="match status" value="1"/>
</dbReference>
<dbReference type="Pfam" id="PF18044">
    <property type="entry name" value="zf-CCCH_4"/>
    <property type="match status" value="2"/>
</dbReference>
<dbReference type="SMART" id="SM00360">
    <property type="entry name" value="RRM"/>
    <property type="match status" value="1"/>
</dbReference>
<dbReference type="SMART" id="SM00356">
    <property type="entry name" value="ZnF_C3H1"/>
    <property type="match status" value="2"/>
</dbReference>
<dbReference type="SUPFAM" id="SSF90229">
    <property type="entry name" value="CCCH zinc finger"/>
    <property type="match status" value="2"/>
</dbReference>
<dbReference type="SUPFAM" id="SSF54928">
    <property type="entry name" value="RNA-binding domain, RBD"/>
    <property type="match status" value="1"/>
</dbReference>
<dbReference type="PROSITE" id="PS50102">
    <property type="entry name" value="RRM"/>
    <property type="match status" value="1"/>
</dbReference>
<dbReference type="PROSITE" id="PS50103">
    <property type="entry name" value="ZF_C3H1"/>
    <property type="match status" value="2"/>
</dbReference>
<sequence length="352" mass="40684">MNPLTQVKNLQKINARESDLGISDEASWHAKYKNSAYVYVGGIPFDLTEGDLLAVFSQYGEIVDVNLIRDKGTGKSKGFAFLAYEDQRSTILAVDNLNGALVLGRTIKVDHCGAYKKHEEEDEETRRQNREARGVCRAFQRGECTRGDSCKFSHDEKRAANTGWGHEEDRSSKWDHDKNREGRGVCRAFQRGECTRGDSCKFSHDEKRAATTGWGHEEDRSSKWDQDKLNGAKKGGTSFGNRGDFKPDVEEKSYRGRGDGDASYGRPKERERVDREDMGPRSRDAYDMKEQKRSGRYDNAYSRRHNDEIDYVREDKGSRAQDWEKRKAESRRDRNDREEKDRDSLRREDRRR</sequence>